<evidence type="ECO:0000250" key="1"/>
<evidence type="ECO:0000255" key="2"/>
<evidence type="ECO:0000305" key="3"/>
<sequence>MGRKLYYVLATLQLVAVFLFCGGFFPQKVVLKNDSKFIVNPEVQLASKPVFKKLVLVVIDALRSDFLFQKDSSDFEFLHGLLNSGEAWGYTAYSNPPTVTLPRLKGITTGSAPNFLDAILNVAEDDTSSNLKEQDSLLKQFHTHHYKMNFFGDDTWLKLFPLEFFSEYDGTNSFFVSDFEEVDFNVTRHVPYQMEHQKNWDVLILHYLGLDHIGHKGGSKSHFMPSKHREMDSVIKQIYEKIDGDTLMVVLGDHGMNDLGNHGGSSSGETSAALAFLSKRLKKYQSSDIQQSSNVPVEDAHPDYKYLKEVEQIDIVPTLSMLFNLPIPKNSMGVIIDELLQLLPSKLAAIKVQDNYLQLTKLKPGYEAQLEKKSAGTLLEEMREIQSSLAMAATNYNYTFLTYGTTLMIIGTLIVTVWNFQLSQEYIEHVGTSVLLGISMFASSFIEEEHQIWWWITISVLLLMQISNGKKLVVLSGLRLIRGWNNSGQKYIYDNVLHTLLKSHTSVLWWLNVVTFLSVGFPFLRNKDESEKMVSLLSVSFLALSSITYKICFAIVNGDKVPSGLYTFALRSCAMYLANENATESDISQCLVPIARIFFQICGVSIIILLFMKYALNKSTNMLNKLLSVIKFVLLLQTSSANIPLFLIFEILTSVTPDITPIFSLCLQNLTFFQFGGTNSIATVNLTNAYNGVSSNYNIYVVGVLMFLSNYAPSIYWALSLIPQSYKQKTLRLQHYYITGTCLMIACIALRYHLFIWSVFSPKLCYYAAWSLYNVVMDFAITLLGVL</sequence>
<reference key="1">
    <citation type="journal article" date="2004" name="Nature">
        <title>Genome evolution in yeasts.</title>
        <authorList>
            <person name="Dujon B."/>
            <person name="Sherman D."/>
            <person name="Fischer G."/>
            <person name="Durrens P."/>
            <person name="Casaregola S."/>
            <person name="Lafontaine I."/>
            <person name="de Montigny J."/>
            <person name="Marck C."/>
            <person name="Neuveglise C."/>
            <person name="Talla E."/>
            <person name="Goffard N."/>
            <person name="Frangeul L."/>
            <person name="Aigle M."/>
            <person name="Anthouard V."/>
            <person name="Babour A."/>
            <person name="Barbe V."/>
            <person name="Barnay S."/>
            <person name="Blanchin S."/>
            <person name="Beckerich J.-M."/>
            <person name="Beyne E."/>
            <person name="Bleykasten C."/>
            <person name="Boisrame A."/>
            <person name="Boyer J."/>
            <person name="Cattolico L."/>
            <person name="Confanioleri F."/>
            <person name="de Daruvar A."/>
            <person name="Despons L."/>
            <person name="Fabre E."/>
            <person name="Fairhead C."/>
            <person name="Ferry-Dumazet H."/>
            <person name="Groppi A."/>
            <person name="Hantraye F."/>
            <person name="Hennequin C."/>
            <person name="Jauniaux N."/>
            <person name="Joyet P."/>
            <person name="Kachouri R."/>
            <person name="Kerrest A."/>
            <person name="Koszul R."/>
            <person name="Lemaire M."/>
            <person name="Lesur I."/>
            <person name="Ma L."/>
            <person name="Muller H."/>
            <person name="Nicaud J.-M."/>
            <person name="Nikolski M."/>
            <person name="Oztas S."/>
            <person name="Ozier-Kalogeropoulos O."/>
            <person name="Pellenz S."/>
            <person name="Potier S."/>
            <person name="Richard G.-F."/>
            <person name="Straub M.-L."/>
            <person name="Suleau A."/>
            <person name="Swennen D."/>
            <person name="Tekaia F."/>
            <person name="Wesolowski-Louvel M."/>
            <person name="Westhof E."/>
            <person name="Wirth B."/>
            <person name="Zeniou-Meyer M."/>
            <person name="Zivanovic Y."/>
            <person name="Bolotin-Fukuhara M."/>
            <person name="Thierry A."/>
            <person name="Bouchier C."/>
            <person name="Caudron B."/>
            <person name="Scarpelli C."/>
            <person name="Gaillardin C."/>
            <person name="Weissenbach J."/>
            <person name="Wincker P."/>
            <person name="Souciet J.-L."/>
        </authorList>
    </citation>
    <scope>NUCLEOTIDE SEQUENCE [LARGE SCALE GENOMIC DNA]</scope>
    <source>
        <strain>ATCC 8585 / CBS 2359 / DSM 70799 / NBRC 1267 / NRRL Y-1140 / WM37</strain>
    </source>
</reference>
<name>GPI7_KLULA</name>
<organism>
    <name type="scientific">Kluyveromyces lactis (strain ATCC 8585 / CBS 2359 / DSM 70799 / NBRC 1267 / NRRL Y-1140 / WM37)</name>
    <name type="common">Yeast</name>
    <name type="synonym">Candida sphaerica</name>
    <dbReference type="NCBI Taxonomy" id="284590"/>
    <lineage>
        <taxon>Eukaryota</taxon>
        <taxon>Fungi</taxon>
        <taxon>Dikarya</taxon>
        <taxon>Ascomycota</taxon>
        <taxon>Saccharomycotina</taxon>
        <taxon>Saccharomycetes</taxon>
        <taxon>Saccharomycetales</taxon>
        <taxon>Saccharomycetaceae</taxon>
        <taxon>Kluyveromyces</taxon>
    </lineage>
</organism>
<keyword id="KW-0256">Endoplasmic reticulum</keyword>
<keyword id="KW-0325">Glycoprotein</keyword>
<keyword id="KW-0337">GPI-anchor biosynthesis</keyword>
<keyword id="KW-0472">Membrane</keyword>
<keyword id="KW-1185">Reference proteome</keyword>
<keyword id="KW-0808">Transferase</keyword>
<keyword id="KW-0812">Transmembrane</keyword>
<keyword id="KW-1133">Transmembrane helix</keyword>
<protein>
    <recommendedName>
        <fullName>GPI ethanolamine phosphate transferase 2</fullName>
        <ecNumber>2.-.-.-</ecNumber>
    </recommendedName>
    <alternativeName>
        <fullName>Glycosylphosphatidylinositol-anchor biosynthesis protein 7</fullName>
    </alternativeName>
</protein>
<proteinExistence type="inferred from homology"/>
<feature type="chain" id="PRO_0000246196" description="GPI ethanolamine phosphate transferase 2">
    <location>
        <begin position="1"/>
        <end position="787"/>
    </location>
</feature>
<feature type="transmembrane region" description="Helical" evidence="2">
    <location>
        <begin position="400"/>
        <end position="420"/>
    </location>
</feature>
<feature type="transmembrane region" description="Helical" evidence="2">
    <location>
        <begin position="426"/>
        <end position="446"/>
    </location>
</feature>
<feature type="transmembrane region" description="Helical" evidence="2">
    <location>
        <begin position="455"/>
        <end position="475"/>
    </location>
</feature>
<feature type="transmembrane region" description="Helical" evidence="2">
    <location>
        <begin position="504"/>
        <end position="524"/>
    </location>
</feature>
<feature type="transmembrane region" description="Helical" evidence="2">
    <location>
        <begin position="536"/>
        <end position="556"/>
    </location>
</feature>
<feature type="transmembrane region" description="Helical" evidence="2">
    <location>
        <begin position="591"/>
        <end position="611"/>
    </location>
</feature>
<feature type="transmembrane region" description="Helical" evidence="2">
    <location>
        <begin position="629"/>
        <end position="651"/>
    </location>
</feature>
<feature type="transmembrane region" description="Helical" evidence="2">
    <location>
        <begin position="671"/>
        <end position="693"/>
    </location>
</feature>
<feature type="transmembrane region" description="Helical" evidence="2">
    <location>
        <begin position="699"/>
        <end position="719"/>
    </location>
</feature>
<feature type="transmembrane region" description="Helical" evidence="2">
    <location>
        <begin position="740"/>
        <end position="760"/>
    </location>
</feature>
<feature type="transmembrane region" description="Helical" evidence="2">
    <location>
        <begin position="767"/>
        <end position="787"/>
    </location>
</feature>
<feature type="glycosylation site" description="N-linked (GlcNAc...) asparagine" evidence="2">
    <location>
        <position position="33"/>
    </location>
</feature>
<feature type="glycosylation site" description="N-linked (GlcNAc...) asparagine" evidence="2">
    <location>
        <position position="185"/>
    </location>
</feature>
<feature type="glycosylation site" description="N-linked (GlcNAc...) asparagine" evidence="2">
    <location>
        <position position="397"/>
    </location>
</feature>
<feature type="glycosylation site" description="N-linked (GlcNAc...) asparagine" evidence="2">
    <location>
        <position position="485"/>
    </location>
</feature>
<feature type="glycosylation site" description="N-linked (GlcNAc...) asparagine" evidence="2">
    <location>
        <position position="581"/>
    </location>
</feature>
<feature type="glycosylation site" description="N-linked (GlcNAc...) asparagine" evidence="2">
    <location>
        <position position="617"/>
    </location>
</feature>
<feature type="glycosylation site" description="N-linked (GlcNAc...) asparagine" evidence="2">
    <location>
        <position position="669"/>
    </location>
</feature>
<comment type="function">
    <text evidence="1">Ethanolamine phosphate transferase involved in glycosylphosphatidylinositol-anchor biosynthesis. Transfers ethanolamine phosphate to the GPI second mannose (By similarity).</text>
</comment>
<comment type="pathway">
    <text>Glycolipid biosynthesis; glycosylphosphatidylinositol-anchor biosynthesis.</text>
</comment>
<comment type="subcellular location">
    <subcellularLocation>
        <location evidence="1">Endoplasmic reticulum membrane</location>
        <topology evidence="1">Multi-pass membrane protein</topology>
    </subcellularLocation>
</comment>
<comment type="similarity">
    <text evidence="3">Belongs to the PIGG/PIGN/PIGO family. PIGG subfamily.</text>
</comment>
<gene>
    <name type="primary">LAS21</name>
    <name type="synonym">GPI7</name>
    <name type="ordered locus">KLLA0F01705g</name>
</gene>
<accession>Q6CLN2</accession>
<dbReference type="EC" id="2.-.-.-"/>
<dbReference type="EMBL" id="CR382126">
    <property type="protein sequence ID" value="CAG97864.1"/>
    <property type="molecule type" value="Genomic_DNA"/>
</dbReference>
<dbReference type="RefSeq" id="XP_455157.1">
    <property type="nucleotide sequence ID" value="XM_455157.1"/>
</dbReference>
<dbReference type="SMR" id="Q6CLN2"/>
<dbReference type="FunCoup" id="Q6CLN2">
    <property type="interactions" value="491"/>
</dbReference>
<dbReference type="STRING" id="284590.Q6CLN2"/>
<dbReference type="GlyCosmos" id="Q6CLN2">
    <property type="glycosylation" value="7 sites, No reported glycans"/>
</dbReference>
<dbReference type="PaxDb" id="284590-Q6CLN2"/>
<dbReference type="KEGG" id="kla:KLLA0_F01705g"/>
<dbReference type="eggNOG" id="KOG2125">
    <property type="taxonomic scope" value="Eukaryota"/>
</dbReference>
<dbReference type="HOGENOM" id="CLU_004770_0_0_1"/>
<dbReference type="InParanoid" id="Q6CLN2"/>
<dbReference type="OMA" id="SWNQTGQ"/>
<dbReference type="UniPathway" id="UPA00196"/>
<dbReference type="Proteomes" id="UP000000598">
    <property type="component" value="Chromosome F"/>
</dbReference>
<dbReference type="GO" id="GO:0005789">
    <property type="term" value="C:endoplasmic reticulum membrane"/>
    <property type="evidence" value="ECO:0007669"/>
    <property type="project" value="UniProtKB-SubCell"/>
</dbReference>
<dbReference type="GO" id="GO:0051267">
    <property type="term" value="F:CP2 mannose-ethanolamine phosphotransferase activity"/>
    <property type="evidence" value="ECO:0007669"/>
    <property type="project" value="TreeGrafter"/>
</dbReference>
<dbReference type="GO" id="GO:0006506">
    <property type="term" value="P:GPI anchor biosynthetic process"/>
    <property type="evidence" value="ECO:0007669"/>
    <property type="project" value="UniProtKB-UniPathway"/>
</dbReference>
<dbReference type="CDD" id="cd16024">
    <property type="entry name" value="GPI_EPT_2"/>
    <property type="match status" value="1"/>
</dbReference>
<dbReference type="Gene3D" id="3.40.720.10">
    <property type="entry name" value="Alkaline Phosphatase, subunit A"/>
    <property type="match status" value="1"/>
</dbReference>
<dbReference type="InterPro" id="IPR017850">
    <property type="entry name" value="Alkaline_phosphatase_core_sf"/>
</dbReference>
<dbReference type="InterPro" id="IPR002591">
    <property type="entry name" value="Phosphodiest/P_Trfase"/>
</dbReference>
<dbReference type="InterPro" id="IPR037674">
    <property type="entry name" value="PIG-G_N"/>
</dbReference>
<dbReference type="InterPro" id="IPR039527">
    <property type="entry name" value="PIGG/GPI7"/>
</dbReference>
<dbReference type="InterPro" id="IPR045687">
    <property type="entry name" value="PIGG/GPI7_C"/>
</dbReference>
<dbReference type="PANTHER" id="PTHR23072:SF0">
    <property type="entry name" value="GPI ETHANOLAMINE PHOSPHATE TRANSFERASE 2"/>
    <property type="match status" value="1"/>
</dbReference>
<dbReference type="PANTHER" id="PTHR23072">
    <property type="entry name" value="PHOSPHATIDYLINOSITOL GLYCAN-RELATED"/>
    <property type="match status" value="1"/>
</dbReference>
<dbReference type="Pfam" id="PF01663">
    <property type="entry name" value="Phosphodiest"/>
    <property type="match status" value="1"/>
</dbReference>
<dbReference type="Pfam" id="PF19316">
    <property type="entry name" value="PIGO_PIGG"/>
    <property type="match status" value="1"/>
</dbReference>
<dbReference type="SUPFAM" id="SSF53649">
    <property type="entry name" value="Alkaline phosphatase-like"/>
    <property type="match status" value="1"/>
</dbReference>